<comment type="function">
    <text evidence="1">Functions in the N-end rule pathway of protein degradation where it conjugates Leu, Phe and, less efficiently, Met from aminoacyl-tRNAs to the N-termini of proteins containing an N-terminal arginine or lysine.</text>
</comment>
<comment type="catalytic activity">
    <reaction evidence="1">
        <text>N-terminal L-lysyl-[protein] + L-leucyl-tRNA(Leu) = N-terminal L-leucyl-L-lysyl-[protein] + tRNA(Leu) + H(+)</text>
        <dbReference type="Rhea" id="RHEA:12340"/>
        <dbReference type="Rhea" id="RHEA-COMP:9613"/>
        <dbReference type="Rhea" id="RHEA-COMP:9622"/>
        <dbReference type="Rhea" id="RHEA-COMP:12670"/>
        <dbReference type="Rhea" id="RHEA-COMP:12671"/>
        <dbReference type="ChEBI" id="CHEBI:15378"/>
        <dbReference type="ChEBI" id="CHEBI:65249"/>
        <dbReference type="ChEBI" id="CHEBI:78442"/>
        <dbReference type="ChEBI" id="CHEBI:78494"/>
        <dbReference type="ChEBI" id="CHEBI:133043"/>
        <dbReference type="EC" id="2.3.2.6"/>
    </reaction>
</comment>
<comment type="catalytic activity">
    <reaction evidence="1">
        <text>N-terminal L-arginyl-[protein] + L-leucyl-tRNA(Leu) = N-terminal L-leucyl-L-arginyl-[protein] + tRNA(Leu) + H(+)</text>
        <dbReference type="Rhea" id="RHEA:50416"/>
        <dbReference type="Rhea" id="RHEA-COMP:9613"/>
        <dbReference type="Rhea" id="RHEA-COMP:9622"/>
        <dbReference type="Rhea" id="RHEA-COMP:12672"/>
        <dbReference type="Rhea" id="RHEA-COMP:12673"/>
        <dbReference type="ChEBI" id="CHEBI:15378"/>
        <dbReference type="ChEBI" id="CHEBI:64719"/>
        <dbReference type="ChEBI" id="CHEBI:78442"/>
        <dbReference type="ChEBI" id="CHEBI:78494"/>
        <dbReference type="ChEBI" id="CHEBI:133044"/>
        <dbReference type="EC" id="2.3.2.6"/>
    </reaction>
</comment>
<comment type="catalytic activity">
    <reaction evidence="1">
        <text>L-phenylalanyl-tRNA(Phe) + an N-terminal L-alpha-aminoacyl-[protein] = an N-terminal L-phenylalanyl-L-alpha-aminoacyl-[protein] + tRNA(Phe)</text>
        <dbReference type="Rhea" id="RHEA:43632"/>
        <dbReference type="Rhea" id="RHEA-COMP:9668"/>
        <dbReference type="Rhea" id="RHEA-COMP:9699"/>
        <dbReference type="Rhea" id="RHEA-COMP:10636"/>
        <dbReference type="Rhea" id="RHEA-COMP:10637"/>
        <dbReference type="ChEBI" id="CHEBI:78442"/>
        <dbReference type="ChEBI" id="CHEBI:78531"/>
        <dbReference type="ChEBI" id="CHEBI:78597"/>
        <dbReference type="ChEBI" id="CHEBI:83561"/>
        <dbReference type="EC" id="2.3.2.6"/>
    </reaction>
</comment>
<comment type="subcellular location">
    <subcellularLocation>
        <location evidence="1">Cytoplasm</location>
    </subcellularLocation>
</comment>
<comment type="similarity">
    <text evidence="1">Belongs to the L/F-transferase family.</text>
</comment>
<reference key="1">
    <citation type="journal article" date="2007" name="J. Bacteriol.">
        <title>The genome sequence of avian pathogenic Escherichia coli strain O1:K1:H7 shares strong similarities with human extraintestinal pathogenic E. coli genomes.</title>
        <authorList>
            <person name="Johnson T.J."/>
            <person name="Kariyawasam S."/>
            <person name="Wannemuehler Y."/>
            <person name="Mangiamele P."/>
            <person name="Johnson S.J."/>
            <person name="Doetkott C."/>
            <person name="Skyberg J.A."/>
            <person name="Lynne A.M."/>
            <person name="Johnson J.R."/>
            <person name="Nolan L.K."/>
        </authorList>
    </citation>
    <scope>NUCLEOTIDE SEQUENCE [LARGE SCALE GENOMIC DNA]</scope>
</reference>
<dbReference type="EC" id="2.3.2.6" evidence="1"/>
<dbReference type="EMBL" id="CP000468">
    <property type="protein sequence ID" value="ABJ00268.1"/>
    <property type="molecule type" value="Genomic_DNA"/>
</dbReference>
<dbReference type="RefSeq" id="WP_001241673.1">
    <property type="nucleotide sequence ID" value="NZ_CADILS010000017.1"/>
</dbReference>
<dbReference type="SMR" id="A1A9C8"/>
<dbReference type="KEGG" id="ecv:APECO1_1204"/>
<dbReference type="HOGENOM" id="CLU_075045_0_0_6"/>
<dbReference type="Proteomes" id="UP000008216">
    <property type="component" value="Chromosome"/>
</dbReference>
<dbReference type="GO" id="GO:0005737">
    <property type="term" value="C:cytoplasm"/>
    <property type="evidence" value="ECO:0007669"/>
    <property type="project" value="UniProtKB-SubCell"/>
</dbReference>
<dbReference type="GO" id="GO:0008914">
    <property type="term" value="F:leucyl-tRNA--protein transferase activity"/>
    <property type="evidence" value="ECO:0007669"/>
    <property type="project" value="UniProtKB-UniRule"/>
</dbReference>
<dbReference type="GO" id="GO:0030163">
    <property type="term" value="P:protein catabolic process"/>
    <property type="evidence" value="ECO:0007669"/>
    <property type="project" value="UniProtKB-UniRule"/>
</dbReference>
<dbReference type="FunFam" id="3.30.70.3550:FF:000001">
    <property type="entry name" value="Leucyl/phenylalanyl-tRNA--protein transferase"/>
    <property type="match status" value="1"/>
</dbReference>
<dbReference type="FunFam" id="3.40.630.70:FF:000001">
    <property type="entry name" value="Leucyl/phenylalanyl-tRNA--protein transferase"/>
    <property type="match status" value="1"/>
</dbReference>
<dbReference type="Gene3D" id="3.40.630.70">
    <property type="entry name" value="Leucyl/phenylalanyl-tRNA-protein transferase, C-terminal domain"/>
    <property type="match status" value="1"/>
</dbReference>
<dbReference type="Gene3D" id="3.30.70.3550">
    <property type="entry name" value="Leucyl/phenylalanyl-tRNA-protein transferase, N-terminal domain"/>
    <property type="match status" value="1"/>
</dbReference>
<dbReference type="HAMAP" id="MF_00688">
    <property type="entry name" value="Leu_Phe_trans"/>
    <property type="match status" value="1"/>
</dbReference>
<dbReference type="InterPro" id="IPR016181">
    <property type="entry name" value="Acyl_CoA_acyltransferase"/>
</dbReference>
<dbReference type="InterPro" id="IPR004616">
    <property type="entry name" value="Leu/Phe-tRNA_Trfase"/>
</dbReference>
<dbReference type="InterPro" id="IPR042203">
    <property type="entry name" value="Leu/Phe-tRNA_Trfase_C"/>
</dbReference>
<dbReference type="InterPro" id="IPR042221">
    <property type="entry name" value="Leu/Phe-tRNA_Trfase_N"/>
</dbReference>
<dbReference type="NCBIfam" id="TIGR00667">
    <property type="entry name" value="aat"/>
    <property type="match status" value="1"/>
</dbReference>
<dbReference type="PANTHER" id="PTHR30098">
    <property type="entry name" value="LEUCYL/PHENYLALANYL-TRNA--PROTEIN TRANSFERASE"/>
    <property type="match status" value="1"/>
</dbReference>
<dbReference type="PANTHER" id="PTHR30098:SF2">
    <property type="entry name" value="LEUCYL_PHENYLALANYL-TRNA--PROTEIN TRANSFERASE"/>
    <property type="match status" value="1"/>
</dbReference>
<dbReference type="Pfam" id="PF03588">
    <property type="entry name" value="Leu_Phe_trans"/>
    <property type="match status" value="1"/>
</dbReference>
<dbReference type="SUPFAM" id="SSF55729">
    <property type="entry name" value="Acyl-CoA N-acyltransferases (Nat)"/>
    <property type="match status" value="1"/>
</dbReference>
<organism>
    <name type="scientific">Escherichia coli O1:K1 / APEC</name>
    <dbReference type="NCBI Taxonomy" id="405955"/>
    <lineage>
        <taxon>Bacteria</taxon>
        <taxon>Pseudomonadati</taxon>
        <taxon>Pseudomonadota</taxon>
        <taxon>Gammaproteobacteria</taxon>
        <taxon>Enterobacterales</taxon>
        <taxon>Enterobacteriaceae</taxon>
        <taxon>Escherichia</taxon>
    </lineage>
</organism>
<keyword id="KW-0012">Acyltransferase</keyword>
<keyword id="KW-0963">Cytoplasm</keyword>
<keyword id="KW-1185">Reference proteome</keyword>
<keyword id="KW-0808">Transferase</keyword>
<feature type="chain" id="PRO_0000304335" description="Leucyl/phenylalanyl-tRNA--protein transferase">
    <location>
        <begin position="1"/>
        <end position="234"/>
    </location>
</feature>
<evidence type="ECO:0000255" key="1">
    <source>
        <dbReference type="HAMAP-Rule" id="MF_00688"/>
    </source>
</evidence>
<accession>A1A9C8</accession>
<gene>
    <name evidence="1" type="primary">aat</name>
    <name type="ordered locus">Ecok1_07740</name>
    <name type="ORF">APECO1_1204</name>
</gene>
<sequence length="234" mass="26704">MRLVQLSRHSIAFPSPEGALREPNGLLALGGDLSPARLLMAYQRGIFPWFSPGDPILWWSPDPRAVLWPESLHISRSMKRFHKRSPYRVTMNYAFGQVIEGCASDREEGTWITRGVVEAYHRLHELGHAHSIEVWREDELVGGMYGVAQGTLFCGESMFSRMENASKTALLVFCDEFIRHGGKLIDCQVLNDHTASLGACEIPRRDYLNYLNQMRLGRLPNNFWVPRCLFSPQE</sequence>
<name>LFTR_ECOK1</name>
<proteinExistence type="inferred from homology"/>
<protein>
    <recommendedName>
        <fullName evidence="1">Leucyl/phenylalanyl-tRNA--protein transferase</fullName>
        <ecNumber evidence="1">2.3.2.6</ecNumber>
    </recommendedName>
    <alternativeName>
        <fullName evidence="1">L/F-transferase</fullName>
    </alternativeName>
    <alternativeName>
        <fullName evidence="1">Leucyltransferase</fullName>
    </alternativeName>
    <alternativeName>
        <fullName evidence="1">Phenyalanyltransferase</fullName>
    </alternativeName>
</protein>